<keyword id="KW-0687">Ribonucleoprotein</keyword>
<keyword id="KW-0689">Ribosomal protein</keyword>
<comment type="similarity">
    <text evidence="1">Belongs to the bacterial ribosomal protein bL28 family.</text>
</comment>
<accession>B8H776</accession>
<organism>
    <name type="scientific">Pseudarthrobacter chlorophenolicus (strain ATCC 700700 / DSM 12829 / CIP 107037 / JCM 12360 / KCTC 9906 / NCIMB 13794 / A6)</name>
    <name type="common">Arthrobacter chlorophenolicus</name>
    <dbReference type="NCBI Taxonomy" id="452863"/>
    <lineage>
        <taxon>Bacteria</taxon>
        <taxon>Bacillati</taxon>
        <taxon>Actinomycetota</taxon>
        <taxon>Actinomycetes</taxon>
        <taxon>Micrococcales</taxon>
        <taxon>Micrococcaceae</taxon>
        <taxon>Pseudarthrobacter</taxon>
    </lineage>
</organism>
<protein>
    <recommendedName>
        <fullName evidence="1">Large ribosomal subunit protein bL28</fullName>
    </recommendedName>
    <alternativeName>
        <fullName evidence="3">50S ribosomal protein L28</fullName>
    </alternativeName>
</protein>
<dbReference type="EMBL" id="CP001341">
    <property type="protein sequence ID" value="ACL41678.1"/>
    <property type="molecule type" value="Genomic_DNA"/>
</dbReference>
<dbReference type="RefSeq" id="WP_015938871.1">
    <property type="nucleotide sequence ID" value="NC_011886.1"/>
</dbReference>
<dbReference type="SMR" id="B8H776"/>
<dbReference type="STRING" id="452863.Achl_3723"/>
<dbReference type="KEGG" id="ach:Achl_3723"/>
<dbReference type="eggNOG" id="COG0227">
    <property type="taxonomic scope" value="Bacteria"/>
</dbReference>
<dbReference type="HOGENOM" id="CLU_064548_3_1_11"/>
<dbReference type="OrthoDB" id="9805609at2"/>
<dbReference type="Proteomes" id="UP000002505">
    <property type="component" value="Chromosome"/>
</dbReference>
<dbReference type="GO" id="GO:1990904">
    <property type="term" value="C:ribonucleoprotein complex"/>
    <property type="evidence" value="ECO:0007669"/>
    <property type="project" value="UniProtKB-KW"/>
</dbReference>
<dbReference type="GO" id="GO:0005840">
    <property type="term" value="C:ribosome"/>
    <property type="evidence" value="ECO:0007669"/>
    <property type="project" value="UniProtKB-KW"/>
</dbReference>
<dbReference type="GO" id="GO:0003735">
    <property type="term" value="F:structural constituent of ribosome"/>
    <property type="evidence" value="ECO:0007669"/>
    <property type="project" value="InterPro"/>
</dbReference>
<dbReference type="GO" id="GO:0006412">
    <property type="term" value="P:translation"/>
    <property type="evidence" value="ECO:0007669"/>
    <property type="project" value="UniProtKB-UniRule"/>
</dbReference>
<dbReference type="FunFam" id="2.30.170.40:FF:000001">
    <property type="entry name" value="50S ribosomal protein L28"/>
    <property type="match status" value="1"/>
</dbReference>
<dbReference type="Gene3D" id="2.30.170.40">
    <property type="entry name" value="Ribosomal protein L28/L24"/>
    <property type="match status" value="1"/>
</dbReference>
<dbReference type="HAMAP" id="MF_00373">
    <property type="entry name" value="Ribosomal_bL28"/>
    <property type="match status" value="1"/>
</dbReference>
<dbReference type="InterPro" id="IPR026569">
    <property type="entry name" value="Ribosomal_bL28"/>
</dbReference>
<dbReference type="InterPro" id="IPR034704">
    <property type="entry name" value="Ribosomal_bL28/bL31-like_sf"/>
</dbReference>
<dbReference type="InterPro" id="IPR001383">
    <property type="entry name" value="Ribosomal_bL28_bact-type"/>
</dbReference>
<dbReference type="InterPro" id="IPR037147">
    <property type="entry name" value="Ribosomal_bL28_sf"/>
</dbReference>
<dbReference type="NCBIfam" id="TIGR00009">
    <property type="entry name" value="L28"/>
    <property type="match status" value="1"/>
</dbReference>
<dbReference type="PANTHER" id="PTHR13528">
    <property type="entry name" value="39S RIBOSOMAL PROTEIN L28, MITOCHONDRIAL"/>
    <property type="match status" value="1"/>
</dbReference>
<dbReference type="PANTHER" id="PTHR13528:SF2">
    <property type="entry name" value="LARGE RIBOSOMAL SUBUNIT PROTEIN BL28M"/>
    <property type="match status" value="1"/>
</dbReference>
<dbReference type="Pfam" id="PF00830">
    <property type="entry name" value="Ribosomal_L28"/>
    <property type="match status" value="1"/>
</dbReference>
<dbReference type="SUPFAM" id="SSF143800">
    <property type="entry name" value="L28p-like"/>
    <property type="match status" value="1"/>
</dbReference>
<proteinExistence type="inferred from homology"/>
<name>RL28_PSECP</name>
<evidence type="ECO:0000255" key="1">
    <source>
        <dbReference type="HAMAP-Rule" id="MF_00373"/>
    </source>
</evidence>
<evidence type="ECO:0000256" key="2">
    <source>
        <dbReference type="SAM" id="MobiDB-lite"/>
    </source>
</evidence>
<evidence type="ECO:0000305" key="3"/>
<gene>
    <name evidence="1" type="primary">rpmB</name>
    <name type="ordered locus">Achl_3723</name>
</gene>
<feature type="chain" id="PRO_1000195899" description="Large ribosomal subunit protein bL28">
    <location>
        <begin position="1"/>
        <end position="78"/>
    </location>
</feature>
<feature type="region of interest" description="Disordered" evidence="2">
    <location>
        <begin position="1"/>
        <end position="31"/>
    </location>
</feature>
<reference key="1">
    <citation type="submission" date="2009-01" db="EMBL/GenBank/DDBJ databases">
        <title>Complete sequence of chromosome of Arthrobacter chlorophenolicus A6.</title>
        <authorList>
            <consortium name="US DOE Joint Genome Institute"/>
            <person name="Lucas S."/>
            <person name="Copeland A."/>
            <person name="Lapidus A."/>
            <person name="Glavina del Rio T."/>
            <person name="Tice H."/>
            <person name="Bruce D."/>
            <person name="Goodwin L."/>
            <person name="Pitluck S."/>
            <person name="Goltsman E."/>
            <person name="Clum A."/>
            <person name="Larimer F."/>
            <person name="Land M."/>
            <person name="Hauser L."/>
            <person name="Kyrpides N."/>
            <person name="Mikhailova N."/>
            <person name="Jansson J."/>
            <person name="Richardson P."/>
        </authorList>
    </citation>
    <scope>NUCLEOTIDE SEQUENCE [LARGE SCALE GENOMIC DNA]</scope>
    <source>
        <strain>ATCC 700700 / DSM 12829 / CIP 107037 / JCM 12360 / KCTC 9906 / NCIMB 13794 / A6</strain>
    </source>
</reference>
<sequence>MAAHCQVTGAEPGFGHSISHSHRRNKRRFDPNIQKKRYWVPSLRRNVTLQVSARGIKTIDVRGIDAVVASILARGVKL</sequence>